<comment type="function">
    <text evidence="1">Small subunit of the glutamine-dependent carbamoyl phosphate synthetase (CPSase). CPSase catalyzes the formation of carbamoyl phosphate from the ammonia moiety of glutamine, carbonate, and phosphate donated by ATP, constituting the first step of 2 biosynthetic pathways, one leading to arginine and/or urea and the other to pyrimidine nucleotides. The small subunit (glutamine amidotransferase) binds and cleaves glutamine to supply the large subunit with the substrate ammonia.</text>
</comment>
<comment type="catalytic activity">
    <reaction evidence="1">
        <text>hydrogencarbonate + L-glutamine + 2 ATP + H2O = carbamoyl phosphate + L-glutamate + 2 ADP + phosphate + 2 H(+)</text>
        <dbReference type="Rhea" id="RHEA:18633"/>
        <dbReference type="ChEBI" id="CHEBI:15377"/>
        <dbReference type="ChEBI" id="CHEBI:15378"/>
        <dbReference type="ChEBI" id="CHEBI:17544"/>
        <dbReference type="ChEBI" id="CHEBI:29985"/>
        <dbReference type="ChEBI" id="CHEBI:30616"/>
        <dbReference type="ChEBI" id="CHEBI:43474"/>
        <dbReference type="ChEBI" id="CHEBI:58228"/>
        <dbReference type="ChEBI" id="CHEBI:58359"/>
        <dbReference type="ChEBI" id="CHEBI:456216"/>
        <dbReference type="EC" id="6.3.5.5"/>
    </reaction>
</comment>
<comment type="catalytic activity">
    <molecule>Carbamoyl phosphate synthase small chain</molecule>
    <reaction evidence="1">
        <text>L-glutamine + H2O = L-glutamate + NH4(+)</text>
        <dbReference type="Rhea" id="RHEA:15889"/>
        <dbReference type="ChEBI" id="CHEBI:15377"/>
        <dbReference type="ChEBI" id="CHEBI:28938"/>
        <dbReference type="ChEBI" id="CHEBI:29985"/>
        <dbReference type="ChEBI" id="CHEBI:58359"/>
    </reaction>
</comment>
<comment type="pathway">
    <text evidence="1">Amino-acid biosynthesis; L-arginine biosynthesis; carbamoyl phosphate from bicarbonate: step 1/1.</text>
</comment>
<comment type="pathway">
    <text evidence="1">Pyrimidine metabolism; UMP biosynthesis via de novo pathway; (S)-dihydroorotate from bicarbonate: step 1/3.</text>
</comment>
<comment type="subunit">
    <text evidence="1">Composed of two chains; the small (or glutamine) chain promotes the hydrolysis of glutamine to ammonia, which is used by the large (or ammonia) chain to synthesize carbamoyl phosphate. Tetramer of heterodimers (alpha,beta)4.</text>
</comment>
<comment type="similarity">
    <text evidence="1">Belongs to the CarA family.</text>
</comment>
<organism>
    <name type="scientific">Bartonella tribocorum (strain CIP 105476 / IBS 506)</name>
    <dbReference type="NCBI Taxonomy" id="382640"/>
    <lineage>
        <taxon>Bacteria</taxon>
        <taxon>Pseudomonadati</taxon>
        <taxon>Pseudomonadota</taxon>
        <taxon>Alphaproteobacteria</taxon>
        <taxon>Hyphomicrobiales</taxon>
        <taxon>Bartonellaceae</taxon>
        <taxon>Bartonella</taxon>
    </lineage>
</organism>
<dbReference type="EC" id="6.3.5.5" evidence="1"/>
<dbReference type="EMBL" id="AM260525">
    <property type="protein sequence ID" value="CAK01963.1"/>
    <property type="molecule type" value="Genomic_DNA"/>
</dbReference>
<dbReference type="RefSeq" id="WP_012232086.1">
    <property type="nucleotide sequence ID" value="NC_010161.1"/>
</dbReference>
<dbReference type="SMR" id="A9IWF8"/>
<dbReference type="KEGG" id="btr:BT_1630"/>
<dbReference type="eggNOG" id="COG0505">
    <property type="taxonomic scope" value="Bacteria"/>
</dbReference>
<dbReference type="HOGENOM" id="CLU_035901_2_2_5"/>
<dbReference type="UniPathway" id="UPA00068">
    <property type="reaction ID" value="UER00171"/>
</dbReference>
<dbReference type="UniPathway" id="UPA00070">
    <property type="reaction ID" value="UER00115"/>
</dbReference>
<dbReference type="Proteomes" id="UP000001592">
    <property type="component" value="Chromosome"/>
</dbReference>
<dbReference type="GO" id="GO:0005524">
    <property type="term" value="F:ATP binding"/>
    <property type="evidence" value="ECO:0007669"/>
    <property type="project" value="UniProtKB-UniRule"/>
</dbReference>
<dbReference type="GO" id="GO:0004088">
    <property type="term" value="F:carbamoyl-phosphate synthase (glutamine-hydrolyzing) activity"/>
    <property type="evidence" value="ECO:0007669"/>
    <property type="project" value="UniProtKB-UniRule"/>
</dbReference>
<dbReference type="GO" id="GO:0004359">
    <property type="term" value="F:glutaminase activity"/>
    <property type="evidence" value="ECO:0007669"/>
    <property type="project" value="RHEA"/>
</dbReference>
<dbReference type="GO" id="GO:0006207">
    <property type="term" value="P:'de novo' pyrimidine nucleobase biosynthetic process"/>
    <property type="evidence" value="ECO:0007669"/>
    <property type="project" value="InterPro"/>
</dbReference>
<dbReference type="GO" id="GO:0044205">
    <property type="term" value="P:'de novo' UMP biosynthetic process"/>
    <property type="evidence" value="ECO:0007669"/>
    <property type="project" value="UniProtKB-UniRule"/>
</dbReference>
<dbReference type="GO" id="GO:0006541">
    <property type="term" value="P:glutamine metabolic process"/>
    <property type="evidence" value="ECO:0007669"/>
    <property type="project" value="InterPro"/>
</dbReference>
<dbReference type="GO" id="GO:0006526">
    <property type="term" value="P:L-arginine biosynthetic process"/>
    <property type="evidence" value="ECO:0007669"/>
    <property type="project" value="UniProtKB-UniRule"/>
</dbReference>
<dbReference type="CDD" id="cd01744">
    <property type="entry name" value="GATase1_CPSase"/>
    <property type="match status" value="1"/>
</dbReference>
<dbReference type="Gene3D" id="3.40.50.880">
    <property type="match status" value="1"/>
</dbReference>
<dbReference type="Gene3D" id="3.50.30.20">
    <property type="entry name" value="Carbamoyl-phosphate synthase small subunit, N-terminal domain"/>
    <property type="match status" value="1"/>
</dbReference>
<dbReference type="HAMAP" id="MF_01209">
    <property type="entry name" value="CPSase_S_chain"/>
    <property type="match status" value="1"/>
</dbReference>
<dbReference type="InterPro" id="IPR050472">
    <property type="entry name" value="Anth_synth/Amidotransfase"/>
</dbReference>
<dbReference type="InterPro" id="IPR006274">
    <property type="entry name" value="CarbamoylP_synth_ssu"/>
</dbReference>
<dbReference type="InterPro" id="IPR002474">
    <property type="entry name" value="CarbamoylP_synth_ssu_N"/>
</dbReference>
<dbReference type="InterPro" id="IPR036480">
    <property type="entry name" value="CarbP_synth_ssu_N_sf"/>
</dbReference>
<dbReference type="InterPro" id="IPR029062">
    <property type="entry name" value="Class_I_gatase-like"/>
</dbReference>
<dbReference type="InterPro" id="IPR035686">
    <property type="entry name" value="CPSase_GATase1"/>
</dbReference>
<dbReference type="InterPro" id="IPR017926">
    <property type="entry name" value="GATASE"/>
</dbReference>
<dbReference type="NCBIfam" id="TIGR01368">
    <property type="entry name" value="CPSaseIIsmall"/>
    <property type="match status" value="1"/>
</dbReference>
<dbReference type="NCBIfam" id="NF009475">
    <property type="entry name" value="PRK12838.1"/>
    <property type="match status" value="1"/>
</dbReference>
<dbReference type="PANTHER" id="PTHR43418:SF7">
    <property type="entry name" value="CARBAMOYL-PHOSPHATE SYNTHASE SMALL CHAIN"/>
    <property type="match status" value="1"/>
</dbReference>
<dbReference type="PANTHER" id="PTHR43418">
    <property type="entry name" value="MULTIFUNCTIONAL TRYPTOPHAN BIOSYNTHESIS PROTEIN-RELATED"/>
    <property type="match status" value="1"/>
</dbReference>
<dbReference type="Pfam" id="PF00988">
    <property type="entry name" value="CPSase_sm_chain"/>
    <property type="match status" value="1"/>
</dbReference>
<dbReference type="Pfam" id="PF00117">
    <property type="entry name" value="GATase"/>
    <property type="match status" value="1"/>
</dbReference>
<dbReference type="PRINTS" id="PR00097">
    <property type="entry name" value="ANTSNTHASEII"/>
</dbReference>
<dbReference type="PRINTS" id="PR00099">
    <property type="entry name" value="CPSGATASE"/>
</dbReference>
<dbReference type="PRINTS" id="PR00096">
    <property type="entry name" value="GATASE"/>
</dbReference>
<dbReference type="SMART" id="SM01097">
    <property type="entry name" value="CPSase_sm_chain"/>
    <property type="match status" value="1"/>
</dbReference>
<dbReference type="SUPFAM" id="SSF52021">
    <property type="entry name" value="Carbamoyl phosphate synthetase, small subunit N-terminal domain"/>
    <property type="match status" value="1"/>
</dbReference>
<dbReference type="SUPFAM" id="SSF52317">
    <property type="entry name" value="Class I glutamine amidotransferase-like"/>
    <property type="match status" value="1"/>
</dbReference>
<dbReference type="PROSITE" id="PS51273">
    <property type="entry name" value="GATASE_TYPE_1"/>
    <property type="match status" value="1"/>
</dbReference>
<keyword id="KW-0028">Amino-acid biosynthesis</keyword>
<keyword id="KW-0055">Arginine biosynthesis</keyword>
<keyword id="KW-0067">ATP-binding</keyword>
<keyword id="KW-0315">Glutamine amidotransferase</keyword>
<keyword id="KW-0436">Ligase</keyword>
<keyword id="KW-0547">Nucleotide-binding</keyword>
<keyword id="KW-0665">Pyrimidine biosynthesis</keyword>
<proteinExistence type="inferred from homology"/>
<reference key="1">
    <citation type="journal article" date="2007" name="Nat. Genet.">
        <title>Genomic analysis of Bartonella identifies type IV secretion systems as host adaptability factors.</title>
        <authorList>
            <person name="Saenz H.L."/>
            <person name="Engel P."/>
            <person name="Stoeckli M.C."/>
            <person name="Lanz C."/>
            <person name="Raddatz G."/>
            <person name="Vayssier-Taussat M."/>
            <person name="Birtles R."/>
            <person name="Schuster S.C."/>
            <person name="Dehio C."/>
        </authorList>
    </citation>
    <scope>NUCLEOTIDE SEQUENCE [LARGE SCALE GENOMIC DNA]</scope>
    <source>
        <strain>CIP 105476 / IBS 506</strain>
    </source>
</reference>
<sequence length="398" mass="43263">MIQTISSSRPWSVNTPTALLVLADGTVIEGKGAGATGIAEAELCFNTAITGYEEILTDPSYTQQIVNFTFPHIGNVGANSEDIESLTPLSCHGAVGAIFKADITHPSNYRASENLHQWLKARKIIALCGIDTRALTILIREKGTQNAVIAHNSDGNFDIPSLKKRAQKWHGLVNLDLTEEVTSPSSIEWDEEPWCWNKGYGTNNVHNLHIVAIDYGIKRNILRLMATQKARITVVPAHTTAKEILAMTPDGVFLSNGPGDPAATAQYAIPTINTLIDHNLPIFGICLGHQLLALAVGAKTVKMHQGHHGANHPVKDLNSGKVEIVSMNHGFAVDAATLPKHVQETHISLFDGSNCGIRIIGKPVFSVQYHPEASPGPQDSHYLFQHFCDLIMNHKKIS</sequence>
<feature type="chain" id="PRO_1000164695" description="Carbamoyl phosphate synthase small chain">
    <location>
        <begin position="1"/>
        <end position="398"/>
    </location>
</feature>
<feature type="domain" description="Glutamine amidotransferase type-1" evidence="1">
    <location>
        <begin position="209"/>
        <end position="397"/>
    </location>
</feature>
<feature type="region of interest" description="CPSase" evidence="1">
    <location>
        <begin position="1"/>
        <end position="207"/>
    </location>
</feature>
<feature type="active site" description="Nucleophile" evidence="1">
    <location>
        <position position="286"/>
    </location>
</feature>
<feature type="active site" evidence="1">
    <location>
        <position position="370"/>
    </location>
</feature>
<feature type="active site" evidence="1">
    <location>
        <position position="372"/>
    </location>
</feature>
<feature type="binding site" evidence="1">
    <location>
        <position position="60"/>
    </location>
    <ligand>
        <name>L-glutamine</name>
        <dbReference type="ChEBI" id="CHEBI:58359"/>
    </ligand>
</feature>
<feature type="binding site" evidence="1">
    <location>
        <position position="257"/>
    </location>
    <ligand>
        <name>L-glutamine</name>
        <dbReference type="ChEBI" id="CHEBI:58359"/>
    </ligand>
</feature>
<feature type="binding site" evidence="1">
    <location>
        <position position="259"/>
    </location>
    <ligand>
        <name>L-glutamine</name>
        <dbReference type="ChEBI" id="CHEBI:58359"/>
    </ligand>
</feature>
<feature type="binding site" evidence="1">
    <location>
        <position position="287"/>
    </location>
    <ligand>
        <name>L-glutamine</name>
        <dbReference type="ChEBI" id="CHEBI:58359"/>
    </ligand>
</feature>
<feature type="binding site" evidence="1">
    <location>
        <position position="290"/>
    </location>
    <ligand>
        <name>L-glutamine</name>
        <dbReference type="ChEBI" id="CHEBI:58359"/>
    </ligand>
</feature>
<feature type="binding site" evidence="1">
    <location>
        <position position="328"/>
    </location>
    <ligand>
        <name>L-glutamine</name>
        <dbReference type="ChEBI" id="CHEBI:58359"/>
    </ligand>
</feature>
<feature type="binding site" evidence="1">
    <location>
        <position position="330"/>
    </location>
    <ligand>
        <name>L-glutamine</name>
        <dbReference type="ChEBI" id="CHEBI:58359"/>
    </ligand>
</feature>
<feature type="binding site" evidence="1">
    <location>
        <position position="331"/>
    </location>
    <ligand>
        <name>L-glutamine</name>
        <dbReference type="ChEBI" id="CHEBI:58359"/>
    </ligand>
</feature>
<protein>
    <recommendedName>
        <fullName evidence="1">Carbamoyl phosphate synthase small chain</fullName>
        <ecNumber evidence="1">6.3.5.5</ecNumber>
    </recommendedName>
    <alternativeName>
        <fullName evidence="1">Carbamoyl phosphate synthetase glutamine chain</fullName>
    </alternativeName>
</protein>
<name>CARA_BART1</name>
<accession>A9IWF8</accession>
<gene>
    <name evidence="1" type="primary">carA</name>
    <name type="ordered locus">BT_1630</name>
</gene>
<evidence type="ECO:0000255" key="1">
    <source>
        <dbReference type="HAMAP-Rule" id="MF_01209"/>
    </source>
</evidence>